<protein>
    <recommendedName>
        <fullName evidence="1">Phenylalanine--tRNA ligase alpha subunit</fullName>
        <ecNumber evidence="1">6.1.1.20</ecNumber>
    </recommendedName>
    <alternativeName>
        <fullName evidence="1">Phenylalanyl-tRNA synthetase alpha subunit</fullName>
        <shortName evidence="1">PheRS</shortName>
    </alternativeName>
</protein>
<proteinExistence type="inferred from homology"/>
<dbReference type="EC" id="6.1.1.20" evidence="1"/>
<dbReference type="EMBL" id="CP000941">
    <property type="protein sequence ID" value="ACA12957.1"/>
    <property type="molecule type" value="Genomic_DNA"/>
</dbReference>
<dbReference type="SMR" id="B0U5D9"/>
<dbReference type="KEGG" id="xfm:Xfasm12_2095"/>
<dbReference type="HOGENOM" id="CLU_025086_0_1_6"/>
<dbReference type="GO" id="GO:0005737">
    <property type="term" value="C:cytoplasm"/>
    <property type="evidence" value="ECO:0007669"/>
    <property type="project" value="UniProtKB-SubCell"/>
</dbReference>
<dbReference type="GO" id="GO:0005524">
    <property type="term" value="F:ATP binding"/>
    <property type="evidence" value="ECO:0007669"/>
    <property type="project" value="UniProtKB-UniRule"/>
</dbReference>
<dbReference type="GO" id="GO:0000287">
    <property type="term" value="F:magnesium ion binding"/>
    <property type="evidence" value="ECO:0007669"/>
    <property type="project" value="UniProtKB-UniRule"/>
</dbReference>
<dbReference type="GO" id="GO:0004826">
    <property type="term" value="F:phenylalanine-tRNA ligase activity"/>
    <property type="evidence" value="ECO:0007669"/>
    <property type="project" value="UniProtKB-UniRule"/>
</dbReference>
<dbReference type="GO" id="GO:0000049">
    <property type="term" value="F:tRNA binding"/>
    <property type="evidence" value="ECO:0007669"/>
    <property type="project" value="InterPro"/>
</dbReference>
<dbReference type="GO" id="GO:0006432">
    <property type="term" value="P:phenylalanyl-tRNA aminoacylation"/>
    <property type="evidence" value="ECO:0007669"/>
    <property type="project" value="UniProtKB-UniRule"/>
</dbReference>
<dbReference type="CDD" id="cd00496">
    <property type="entry name" value="PheRS_alpha_core"/>
    <property type="match status" value="1"/>
</dbReference>
<dbReference type="FunFam" id="3.30.930.10:FF:000003">
    <property type="entry name" value="Phenylalanine--tRNA ligase alpha subunit"/>
    <property type="match status" value="1"/>
</dbReference>
<dbReference type="Gene3D" id="3.30.930.10">
    <property type="entry name" value="Bira Bifunctional Protein, Domain 2"/>
    <property type="match status" value="1"/>
</dbReference>
<dbReference type="HAMAP" id="MF_00281">
    <property type="entry name" value="Phe_tRNA_synth_alpha1"/>
    <property type="match status" value="1"/>
</dbReference>
<dbReference type="InterPro" id="IPR006195">
    <property type="entry name" value="aa-tRNA-synth_II"/>
</dbReference>
<dbReference type="InterPro" id="IPR045864">
    <property type="entry name" value="aa-tRNA-synth_II/BPL/LPL"/>
</dbReference>
<dbReference type="InterPro" id="IPR004529">
    <property type="entry name" value="Phe-tRNA-synth_IIc_asu"/>
</dbReference>
<dbReference type="InterPro" id="IPR004188">
    <property type="entry name" value="Phe-tRNA_ligase_II_N"/>
</dbReference>
<dbReference type="InterPro" id="IPR022911">
    <property type="entry name" value="Phe_tRNA_ligase_alpha1_bac"/>
</dbReference>
<dbReference type="InterPro" id="IPR002319">
    <property type="entry name" value="Phenylalanyl-tRNA_Synthase"/>
</dbReference>
<dbReference type="InterPro" id="IPR010978">
    <property type="entry name" value="tRNA-bd_arm"/>
</dbReference>
<dbReference type="NCBIfam" id="TIGR00468">
    <property type="entry name" value="pheS"/>
    <property type="match status" value="1"/>
</dbReference>
<dbReference type="PANTHER" id="PTHR11538:SF41">
    <property type="entry name" value="PHENYLALANINE--TRNA LIGASE, MITOCHONDRIAL"/>
    <property type="match status" value="1"/>
</dbReference>
<dbReference type="PANTHER" id="PTHR11538">
    <property type="entry name" value="PHENYLALANYL-TRNA SYNTHETASE"/>
    <property type="match status" value="1"/>
</dbReference>
<dbReference type="Pfam" id="PF02912">
    <property type="entry name" value="Phe_tRNA-synt_N"/>
    <property type="match status" value="1"/>
</dbReference>
<dbReference type="Pfam" id="PF01409">
    <property type="entry name" value="tRNA-synt_2d"/>
    <property type="match status" value="1"/>
</dbReference>
<dbReference type="SUPFAM" id="SSF55681">
    <property type="entry name" value="Class II aaRS and biotin synthetases"/>
    <property type="match status" value="1"/>
</dbReference>
<dbReference type="SUPFAM" id="SSF46589">
    <property type="entry name" value="tRNA-binding arm"/>
    <property type="match status" value="1"/>
</dbReference>
<dbReference type="PROSITE" id="PS50862">
    <property type="entry name" value="AA_TRNA_LIGASE_II"/>
    <property type="match status" value="1"/>
</dbReference>
<sequence>MVINDIESLTAQALADVAAAQNLDHLEFLRVALLGKNGSITLQLKQLGKLPVEQRKAIGEKLNRVRDLISAALMDRKAALESAALSKRLIDERVDVTLPGRRGERGGLHPVTRTLERITEIFARLGYELVEGPEIEDDWHNFEALNFPLHHPARAMHDTFYFGDGRLLRTHTSGVQVRYMSDHRPPLRMIAAGKVYRSDSDQTHSPMFHQIEGLLLDKHATFVDLKGTLSEFLRAFFERDFEVRFRPSYFPFVEPGAEVDIAWQQSDSSVRWLEVLGCGMVHPNVLKNVGIDSECYTGFAFGLGVERFAMLRYGVDDLRAFFENDVRFLRQFS</sequence>
<gene>
    <name evidence="1" type="primary">pheS</name>
    <name type="ordered locus">Xfasm12_2095</name>
</gene>
<keyword id="KW-0030">Aminoacyl-tRNA synthetase</keyword>
<keyword id="KW-0067">ATP-binding</keyword>
<keyword id="KW-0963">Cytoplasm</keyword>
<keyword id="KW-0436">Ligase</keyword>
<keyword id="KW-0460">Magnesium</keyword>
<keyword id="KW-0479">Metal-binding</keyword>
<keyword id="KW-0547">Nucleotide-binding</keyword>
<keyword id="KW-0648">Protein biosynthesis</keyword>
<organism>
    <name type="scientific">Xylella fastidiosa (strain M12)</name>
    <dbReference type="NCBI Taxonomy" id="405440"/>
    <lineage>
        <taxon>Bacteria</taxon>
        <taxon>Pseudomonadati</taxon>
        <taxon>Pseudomonadota</taxon>
        <taxon>Gammaproteobacteria</taxon>
        <taxon>Lysobacterales</taxon>
        <taxon>Lysobacteraceae</taxon>
        <taxon>Xylella</taxon>
    </lineage>
</organism>
<accession>B0U5D9</accession>
<evidence type="ECO:0000255" key="1">
    <source>
        <dbReference type="HAMAP-Rule" id="MF_00281"/>
    </source>
</evidence>
<comment type="catalytic activity">
    <reaction evidence="1">
        <text>tRNA(Phe) + L-phenylalanine + ATP = L-phenylalanyl-tRNA(Phe) + AMP + diphosphate + H(+)</text>
        <dbReference type="Rhea" id="RHEA:19413"/>
        <dbReference type="Rhea" id="RHEA-COMP:9668"/>
        <dbReference type="Rhea" id="RHEA-COMP:9699"/>
        <dbReference type="ChEBI" id="CHEBI:15378"/>
        <dbReference type="ChEBI" id="CHEBI:30616"/>
        <dbReference type="ChEBI" id="CHEBI:33019"/>
        <dbReference type="ChEBI" id="CHEBI:58095"/>
        <dbReference type="ChEBI" id="CHEBI:78442"/>
        <dbReference type="ChEBI" id="CHEBI:78531"/>
        <dbReference type="ChEBI" id="CHEBI:456215"/>
        <dbReference type="EC" id="6.1.1.20"/>
    </reaction>
</comment>
<comment type="cofactor">
    <cofactor evidence="1">
        <name>Mg(2+)</name>
        <dbReference type="ChEBI" id="CHEBI:18420"/>
    </cofactor>
    <text evidence="1">Binds 2 magnesium ions per tetramer.</text>
</comment>
<comment type="subunit">
    <text evidence="1">Tetramer of two alpha and two beta subunits.</text>
</comment>
<comment type="subcellular location">
    <subcellularLocation>
        <location evidence="1">Cytoplasm</location>
    </subcellularLocation>
</comment>
<comment type="similarity">
    <text evidence="1">Belongs to the class-II aminoacyl-tRNA synthetase family. Phe-tRNA synthetase alpha subunit type 1 subfamily.</text>
</comment>
<reference key="1">
    <citation type="journal article" date="2010" name="J. Bacteriol.">
        <title>Whole genome sequences of two Xylella fastidiosa strains (M12 and M23) causing almond leaf scorch disease in California.</title>
        <authorList>
            <person name="Chen J."/>
            <person name="Xie G."/>
            <person name="Han S."/>
            <person name="Chertkov O."/>
            <person name="Sims D."/>
            <person name="Civerolo E.L."/>
        </authorList>
    </citation>
    <scope>NUCLEOTIDE SEQUENCE [LARGE SCALE GENOMIC DNA]</scope>
    <source>
        <strain>M12</strain>
    </source>
</reference>
<name>SYFA_XYLFM</name>
<feature type="chain" id="PRO_1000114931" description="Phenylalanine--tRNA ligase alpha subunit">
    <location>
        <begin position="1"/>
        <end position="333"/>
    </location>
</feature>
<feature type="binding site" evidence="1">
    <location>
        <position position="254"/>
    </location>
    <ligand>
        <name>Mg(2+)</name>
        <dbReference type="ChEBI" id="CHEBI:18420"/>
        <note>shared with beta subunit</note>
    </ligand>
</feature>